<protein>
    <recommendedName>
        <fullName evidence="1">Small ribosomal subunit protein bS16</fullName>
    </recommendedName>
    <alternativeName>
        <fullName evidence="3">30S ribosomal protein S16</fullName>
    </alternativeName>
</protein>
<proteinExistence type="inferred from homology"/>
<evidence type="ECO:0000255" key="1">
    <source>
        <dbReference type="HAMAP-Rule" id="MF_00385"/>
    </source>
</evidence>
<evidence type="ECO:0000256" key="2">
    <source>
        <dbReference type="SAM" id="MobiDB-lite"/>
    </source>
</evidence>
<evidence type="ECO:0000305" key="3"/>
<comment type="similarity">
    <text evidence="1">Belongs to the bacterial ribosomal protein bS16 family.</text>
</comment>
<name>RS16_XANP2</name>
<gene>
    <name evidence="1" type="primary">rpsP</name>
    <name type="ordered locus">Xaut_1463</name>
</gene>
<accession>A7IFB8</accession>
<reference key="1">
    <citation type="submission" date="2007-07" db="EMBL/GenBank/DDBJ databases">
        <title>Complete sequence of chromosome of Xanthobacter autotrophicus Py2.</title>
        <authorList>
            <consortium name="US DOE Joint Genome Institute"/>
            <person name="Copeland A."/>
            <person name="Lucas S."/>
            <person name="Lapidus A."/>
            <person name="Barry K."/>
            <person name="Glavina del Rio T."/>
            <person name="Hammon N."/>
            <person name="Israni S."/>
            <person name="Dalin E."/>
            <person name="Tice H."/>
            <person name="Pitluck S."/>
            <person name="Sims D."/>
            <person name="Brettin T."/>
            <person name="Bruce D."/>
            <person name="Detter J.C."/>
            <person name="Han C."/>
            <person name="Tapia R."/>
            <person name="Brainard J."/>
            <person name="Schmutz J."/>
            <person name="Larimer F."/>
            <person name="Land M."/>
            <person name="Hauser L."/>
            <person name="Kyrpides N."/>
            <person name="Kim E."/>
            <person name="Ensigns S.A."/>
            <person name="Richardson P."/>
        </authorList>
    </citation>
    <scope>NUCLEOTIDE SEQUENCE [LARGE SCALE GENOMIC DNA]</scope>
    <source>
        <strain>ATCC BAA-1158 / Py2</strain>
    </source>
</reference>
<organism>
    <name type="scientific">Xanthobacter autotrophicus (strain ATCC BAA-1158 / Py2)</name>
    <dbReference type="NCBI Taxonomy" id="78245"/>
    <lineage>
        <taxon>Bacteria</taxon>
        <taxon>Pseudomonadati</taxon>
        <taxon>Pseudomonadota</taxon>
        <taxon>Alphaproteobacteria</taxon>
        <taxon>Hyphomicrobiales</taxon>
        <taxon>Xanthobacteraceae</taxon>
        <taxon>Xanthobacter</taxon>
    </lineage>
</organism>
<feature type="chain" id="PRO_1000122600" description="Small ribosomal subunit protein bS16">
    <location>
        <begin position="1"/>
        <end position="122"/>
    </location>
</feature>
<feature type="region of interest" description="Disordered" evidence="2">
    <location>
        <begin position="81"/>
        <end position="122"/>
    </location>
</feature>
<feature type="compositionally biased region" description="Basic and acidic residues" evidence="2">
    <location>
        <begin position="83"/>
        <end position="110"/>
    </location>
</feature>
<feature type="compositionally biased region" description="Low complexity" evidence="2">
    <location>
        <begin position="111"/>
        <end position="122"/>
    </location>
</feature>
<dbReference type="EMBL" id="CP000781">
    <property type="protein sequence ID" value="ABS66711.1"/>
    <property type="molecule type" value="Genomic_DNA"/>
</dbReference>
<dbReference type="SMR" id="A7IFB8"/>
<dbReference type="STRING" id="78245.Xaut_1463"/>
<dbReference type="KEGG" id="xau:Xaut_1463"/>
<dbReference type="eggNOG" id="COG0228">
    <property type="taxonomic scope" value="Bacteria"/>
</dbReference>
<dbReference type="HOGENOM" id="CLU_100590_3_1_5"/>
<dbReference type="OrthoDB" id="9807878at2"/>
<dbReference type="PhylomeDB" id="A7IFB8"/>
<dbReference type="Proteomes" id="UP000002417">
    <property type="component" value="Chromosome"/>
</dbReference>
<dbReference type="GO" id="GO:0005737">
    <property type="term" value="C:cytoplasm"/>
    <property type="evidence" value="ECO:0007669"/>
    <property type="project" value="UniProtKB-ARBA"/>
</dbReference>
<dbReference type="GO" id="GO:0015935">
    <property type="term" value="C:small ribosomal subunit"/>
    <property type="evidence" value="ECO:0007669"/>
    <property type="project" value="TreeGrafter"/>
</dbReference>
<dbReference type="GO" id="GO:0003735">
    <property type="term" value="F:structural constituent of ribosome"/>
    <property type="evidence" value="ECO:0007669"/>
    <property type="project" value="InterPro"/>
</dbReference>
<dbReference type="GO" id="GO:0006412">
    <property type="term" value="P:translation"/>
    <property type="evidence" value="ECO:0007669"/>
    <property type="project" value="UniProtKB-UniRule"/>
</dbReference>
<dbReference type="Gene3D" id="3.30.1320.10">
    <property type="match status" value="1"/>
</dbReference>
<dbReference type="HAMAP" id="MF_00385">
    <property type="entry name" value="Ribosomal_bS16"/>
    <property type="match status" value="1"/>
</dbReference>
<dbReference type="InterPro" id="IPR000307">
    <property type="entry name" value="Ribosomal_bS16"/>
</dbReference>
<dbReference type="InterPro" id="IPR020592">
    <property type="entry name" value="Ribosomal_bS16_CS"/>
</dbReference>
<dbReference type="InterPro" id="IPR023803">
    <property type="entry name" value="Ribosomal_bS16_dom_sf"/>
</dbReference>
<dbReference type="NCBIfam" id="TIGR00002">
    <property type="entry name" value="S16"/>
    <property type="match status" value="1"/>
</dbReference>
<dbReference type="PANTHER" id="PTHR12919">
    <property type="entry name" value="30S RIBOSOMAL PROTEIN S16"/>
    <property type="match status" value="1"/>
</dbReference>
<dbReference type="PANTHER" id="PTHR12919:SF20">
    <property type="entry name" value="SMALL RIBOSOMAL SUBUNIT PROTEIN BS16M"/>
    <property type="match status" value="1"/>
</dbReference>
<dbReference type="Pfam" id="PF00886">
    <property type="entry name" value="Ribosomal_S16"/>
    <property type="match status" value="1"/>
</dbReference>
<dbReference type="SUPFAM" id="SSF54565">
    <property type="entry name" value="Ribosomal protein S16"/>
    <property type="match status" value="1"/>
</dbReference>
<dbReference type="PROSITE" id="PS00732">
    <property type="entry name" value="RIBOSOMAL_S16"/>
    <property type="match status" value="1"/>
</dbReference>
<sequence>MSLKIRLARGGAKKRPYYRIVIADARSPRDGRFIEKIGTFNPLLAKDAENRVVLDADKAKAWLEKGAQPTDRVARFLDAAGLMKRDAKNNPKKGEPGEKAKERAKERAEKAAAGSTEDAAAE</sequence>
<keyword id="KW-1185">Reference proteome</keyword>
<keyword id="KW-0687">Ribonucleoprotein</keyword>
<keyword id="KW-0689">Ribosomal protein</keyword>